<reference key="1">
    <citation type="journal article" date="2004" name="Nat. Genet.">
        <title>Complete sequencing and characterization of 21,243 full-length human cDNAs.</title>
        <authorList>
            <person name="Ota T."/>
            <person name="Suzuki Y."/>
            <person name="Nishikawa T."/>
            <person name="Otsuki T."/>
            <person name="Sugiyama T."/>
            <person name="Irie R."/>
            <person name="Wakamatsu A."/>
            <person name="Hayashi K."/>
            <person name="Sato H."/>
            <person name="Nagai K."/>
            <person name="Kimura K."/>
            <person name="Makita H."/>
            <person name="Sekine M."/>
            <person name="Obayashi M."/>
            <person name="Nishi T."/>
            <person name="Shibahara T."/>
            <person name="Tanaka T."/>
            <person name="Ishii S."/>
            <person name="Yamamoto J."/>
            <person name="Saito K."/>
            <person name="Kawai Y."/>
            <person name="Isono Y."/>
            <person name="Nakamura Y."/>
            <person name="Nagahari K."/>
            <person name="Murakami K."/>
            <person name="Yasuda T."/>
            <person name="Iwayanagi T."/>
            <person name="Wagatsuma M."/>
            <person name="Shiratori A."/>
            <person name="Sudo H."/>
            <person name="Hosoiri T."/>
            <person name="Kaku Y."/>
            <person name="Kodaira H."/>
            <person name="Kondo H."/>
            <person name="Sugawara M."/>
            <person name="Takahashi M."/>
            <person name="Kanda K."/>
            <person name="Yokoi T."/>
            <person name="Furuya T."/>
            <person name="Kikkawa E."/>
            <person name="Omura Y."/>
            <person name="Abe K."/>
            <person name="Kamihara K."/>
            <person name="Katsuta N."/>
            <person name="Sato K."/>
            <person name="Tanikawa M."/>
            <person name="Yamazaki M."/>
            <person name="Ninomiya K."/>
            <person name="Ishibashi T."/>
            <person name="Yamashita H."/>
            <person name="Murakawa K."/>
            <person name="Fujimori K."/>
            <person name="Tanai H."/>
            <person name="Kimata M."/>
            <person name="Watanabe M."/>
            <person name="Hiraoka S."/>
            <person name="Chiba Y."/>
            <person name="Ishida S."/>
            <person name="Ono Y."/>
            <person name="Takiguchi S."/>
            <person name="Watanabe S."/>
            <person name="Yosida M."/>
            <person name="Hotuta T."/>
            <person name="Kusano J."/>
            <person name="Kanehori K."/>
            <person name="Takahashi-Fujii A."/>
            <person name="Hara H."/>
            <person name="Tanase T.-O."/>
            <person name="Nomura Y."/>
            <person name="Togiya S."/>
            <person name="Komai F."/>
            <person name="Hara R."/>
            <person name="Takeuchi K."/>
            <person name="Arita M."/>
            <person name="Imose N."/>
            <person name="Musashino K."/>
            <person name="Yuuki H."/>
            <person name="Oshima A."/>
            <person name="Sasaki N."/>
            <person name="Aotsuka S."/>
            <person name="Yoshikawa Y."/>
            <person name="Matsunawa H."/>
            <person name="Ichihara T."/>
            <person name="Shiohata N."/>
            <person name="Sano S."/>
            <person name="Moriya S."/>
            <person name="Momiyama H."/>
            <person name="Satoh N."/>
            <person name="Takami S."/>
            <person name="Terashima Y."/>
            <person name="Suzuki O."/>
            <person name="Nakagawa S."/>
            <person name="Senoh A."/>
            <person name="Mizoguchi H."/>
            <person name="Goto Y."/>
            <person name="Shimizu F."/>
            <person name="Wakebe H."/>
            <person name="Hishigaki H."/>
            <person name="Watanabe T."/>
            <person name="Sugiyama A."/>
            <person name="Takemoto M."/>
            <person name="Kawakami B."/>
            <person name="Yamazaki M."/>
            <person name="Watanabe K."/>
            <person name="Kumagai A."/>
            <person name="Itakura S."/>
            <person name="Fukuzumi Y."/>
            <person name="Fujimori Y."/>
            <person name="Komiyama M."/>
            <person name="Tashiro H."/>
            <person name="Tanigami A."/>
            <person name="Fujiwara T."/>
            <person name="Ono T."/>
            <person name="Yamada K."/>
            <person name="Fujii Y."/>
            <person name="Ozaki K."/>
            <person name="Hirao M."/>
            <person name="Ohmori Y."/>
            <person name="Kawabata A."/>
            <person name="Hikiji T."/>
            <person name="Kobatake N."/>
            <person name="Inagaki H."/>
            <person name="Ikema Y."/>
            <person name="Okamoto S."/>
            <person name="Okitani R."/>
            <person name="Kawakami T."/>
            <person name="Noguchi S."/>
            <person name="Itoh T."/>
            <person name="Shigeta K."/>
            <person name="Senba T."/>
            <person name="Matsumura K."/>
            <person name="Nakajima Y."/>
            <person name="Mizuno T."/>
            <person name="Morinaga M."/>
            <person name="Sasaki M."/>
            <person name="Togashi T."/>
            <person name="Oyama M."/>
            <person name="Hata H."/>
            <person name="Watanabe M."/>
            <person name="Komatsu T."/>
            <person name="Mizushima-Sugano J."/>
            <person name="Satoh T."/>
            <person name="Shirai Y."/>
            <person name="Takahashi Y."/>
            <person name="Nakagawa K."/>
            <person name="Okumura K."/>
            <person name="Nagase T."/>
            <person name="Nomura N."/>
            <person name="Kikuchi H."/>
            <person name="Masuho Y."/>
            <person name="Yamashita R."/>
            <person name="Nakai K."/>
            <person name="Yada T."/>
            <person name="Nakamura Y."/>
            <person name="Ohara O."/>
            <person name="Isogai T."/>
            <person name="Sugano S."/>
        </authorList>
    </citation>
    <scope>NUCLEOTIDE SEQUENCE [LARGE SCALE MRNA] (ISOFORMS 1; 2; 3 AND 4)</scope>
    <source>
        <tissue>Brain</tissue>
        <tissue>Embryo</tissue>
    </source>
</reference>
<reference key="2">
    <citation type="journal article" date="2005" name="Nature">
        <title>Generation and annotation of the DNA sequences of human chromosomes 2 and 4.</title>
        <authorList>
            <person name="Hillier L.W."/>
            <person name="Graves T.A."/>
            <person name="Fulton R.S."/>
            <person name="Fulton L.A."/>
            <person name="Pepin K.H."/>
            <person name="Minx P."/>
            <person name="Wagner-McPherson C."/>
            <person name="Layman D."/>
            <person name="Wylie K."/>
            <person name="Sekhon M."/>
            <person name="Becker M.C."/>
            <person name="Fewell G.A."/>
            <person name="Delehaunty K.D."/>
            <person name="Miner T.L."/>
            <person name="Nash W.E."/>
            <person name="Kremitzki C."/>
            <person name="Oddy L."/>
            <person name="Du H."/>
            <person name="Sun H."/>
            <person name="Bradshaw-Cordum H."/>
            <person name="Ali J."/>
            <person name="Carter J."/>
            <person name="Cordes M."/>
            <person name="Harris A."/>
            <person name="Isak A."/>
            <person name="van Brunt A."/>
            <person name="Nguyen C."/>
            <person name="Du F."/>
            <person name="Courtney L."/>
            <person name="Kalicki J."/>
            <person name="Ozersky P."/>
            <person name="Abbott S."/>
            <person name="Armstrong J."/>
            <person name="Belter E.A."/>
            <person name="Caruso L."/>
            <person name="Cedroni M."/>
            <person name="Cotton M."/>
            <person name="Davidson T."/>
            <person name="Desai A."/>
            <person name="Elliott G."/>
            <person name="Erb T."/>
            <person name="Fronick C."/>
            <person name="Gaige T."/>
            <person name="Haakenson W."/>
            <person name="Haglund K."/>
            <person name="Holmes A."/>
            <person name="Harkins R."/>
            <person name="Kim K."/>
            <person name="Kruchowski S.S."/>
            <person name="Strong C.M."/>
            <person name="Grewal N."/>
            <person name="Goyea E."/>
            <person name="Hou S."/>
            <person name="Levy A."/>
            <person name="Martinka S."/>
            <person name="Mead K."/>
            <person name="McLellan M.D."/>
            <person name="Meyer R."/>
            <person name="Randall-Maher J."/>
            <person name="Tomlinson C."/>
            <person name="Dauphin-Kohlberg S."/>
            <person name="Kozlowicz-Reilly A."/>
            <person name="Shah N."/>
            <person name="Swearengen-Shahid S."/>
            <person name="Snider J."/>
            <person name="Strong J.T."/>
            <person name="Thompson J."/>
            <person name="Yoakum M."/>
            <person name="Leonard S."/>
            <person name="Pearman C."/>
            <person name="Trani L."/>
            <person name="Radionenko M."/>
            <person name="Waligorski J.E."/>
            <person name="Wang C."/>
            <person name="Rock S.M."/>
            <person name="Tin-Wollam A.-M."/>
            <person name="Maupin R."/>
            <person name="Latreille P."/>
            <person name="Wendl M.C."/>
            <person name="Yang S.-P."/>
            <person name="Pohl C."/>
            <person name="Wallis J.W."/>
            <person name="Spieth J."/>
            <person name="Bieri T.A."/>
            <person name="Berkowicz N."/>
            <person name="Nelson J.O."/>
            <person name="Osborne J."/>
            <person name="Ding L."/>
            <person name="Meyer R."/>
            <person name="Sabo A."/>
            <person name="Shotland Y."/>
            <person name="Sinha P."/>
            <person name="Wohldmann P.E."/>
            <person name="Cook L.L."/>
            <person name="Hickenbotham M.T."/>
            <person name="Eldred J."/>
            <person name="Williams D."/>
            <person name="Jones T.A."/>
            <person name="She X."/>
            <person name="Ciccarelli F.D."/>
            <person name="Izaurralde E."/>
            <person name="Taylor J."/>
            <person name="Schmutz J."/>
            <person name="Myers R.M."/>
            <person name="Cox D.R."/>
            <person name="Huang X."/>
            <person name="McPherson J.D."/>
            <person name="Mardis E.R."/>
            <person name="Clifton S.W."/>
            <person name="Warren W.C."/>
            <person name="Chinwalla A.T."/>
            <person name="Eddy S.R."/>
            <person name="Marra M.A."/>
            <person name="Ovcharenko I."/>
            <person name="Furey T.S."/>
            <person name="Miller W."/>
            <person name="Eichler E.E."/>
            <person name="Bork P."/>
            <person name="Suyama M."/>
            <person name="Torrents D."/>
            <person name="Waterston R.H."/>
            <person name="Wilson R.K."/>
        </authorList>
    </citation>
    <scope>NUCLEOTIDE SEQUENCE [LARGE SCALE GENOMIC DNA]</scope>
</reference>
<reference key="3">
    <citation type="submission" date="2005-09" db="EMBL/GenBank/DDBJ databases">
        <authorList>
            <person name="Mural R.J."/>
            <person name="Istrail S."/>
            <person name="Sutton G.G."/>
            <person name="Florea L."/>
            <person name="Halpern A.L."/>
            <person name="Mobarry C.M."/>
            <person name="Lippert R."/>
            <person name="Walenz B."/>
            <person name="Shatkay H."/>
            <person name="Dew I."/>
            <person name="Miller J.R."/>
            <person name="Flanigan M.J."/>
            <person name="Edwards N.J."/>
            <person name="Bolanos R."/>
            <person name="Fasulo D."/>
            <person name="Halldorsson B.V."/>
            <person name="Hannenhalli S."/>
            <person name="Turner R."/>
            <person name="Yooseph S."/>
            <person name="Lu F."/>
            <person name="Nusskern D.R."/>
            <person name="Shue B.C."/>
            <person name="Zheng X.H."/>
            <person name="Zhong F."/>
            <person name="Delcher A.L."/>
            <person name="Huson D.H."/>
            <person name="Kravitz S.A."/>
            <person name="Mouchard L."/>
            <person name="Reinert K."/>
            <person name="Remington K.A."/>
            <person name="Clark A.G."/>
            <person name="Waterman M.S."/>
            <person name="Eichler E.E."/>
            <person name="Adams M.D."/>
            <person name="Hunkapiller M.W."/>
            <person name="Myers E.W."/>
            <person name="Venter J.C."/>
        </authorList>
    </citation>
    <scope>NUCLEOTIDE SEQUENCE [LARGE SCALE GENOMIC DNA]</scope>
</reference>
<reference key="4">
    <citation type="journal article" date="2004" name="Genome Res.">
        <title>The status, quality, and expansion of the NIH full-length cDNA project: the Mammalian Gene Collection (MGC).</title>
        <authorList>
            <consortium name="The MGC Project Team"/>
        </authorList>
    </citation>
    <scope>NUCLEOTIDE SEQUENCE [LARGE SCALE MRNA] (ISOFORM 1)</scope>
    <source>
        <tissue>Placenta</tissue>
    </source>
</reference>
<reference key="5">
    <citation type="journal article" date="2002" name="Mol. Biol. Cell">
        <title>Functional proteomic analysis of human nucleolus.</title>
        <authorList>
            <person name="Scherl A."/>
            <person name="Coute Y."/>
            <person name="Deon C."/>
            <person name="Calle A."/>
            <person name="Kindbeiter K."/>
            <person name="Sanchez J.-C."/>
            <person name="Greco A."/>
            <person name="Hochstrasser D.F."/>
            <person name="Diaz J.-J."/>
        </authorList>
    </citation>
    <scope>SUBCELLULAR LOCATION [LARGE SCALE ANALYSIS]</scope>
    <source>
        <tissue>Cervix carcinoma</tissue>
    </source>
</reference>
<reference key="6">
    <citation type="journal article" date="2008" name="Proc. Natl. Acad. Sci. U.S.A.">
        <title>A quantitative atlas of mitotic phosphorylation.</title>
        <authorList>
            <person name="Dephoure N."/>
            <person name="Zhou C."/>
            <person name="Villen J."/>
            <person name="Beausoleil S.A."/>
            <person name="Bakalarski C.E."/>
            <person name="Elledge S.J."/>
            <person name="Gygi S.P."/>
        </authorList>
    </citation>
    <scope>PHOSPHORYLATION [LARGE SCALE ANALYSIS] AT SER-25</scope>
    <scope>IDENTIFICATION BY MASS SPECTROMETRY [LARGE SCALE ANALYSIS]</scope>
    <source>
        <tissue>Cervix carcinoma</tissue>
    </source>
</reference>
<reference key="7">
    <citation type="journal article" date="2012" name="Mol. Cell. Proteomics">
        <title>Comparative large-scale characterisation of plant vs. mammal proteins reveals similar and idiosyncratic N-alpha acetylation features.</title>
        <authorList>
            <person name="Bienvenut W.V."/>
            <person name="Sumpton D."/>
            <person name="Martinez A."/>
            <person name="Lilla S."/>
            <person name="Espagne C."/>
            <person name="Meinnel T."/>
            <person name="Giglione C."/>
        </authorList>
    </citation>
    <scope>ACETYLATION [LARGE SCALE ANALYSIS] AT MET-1</scope>
    <scope>IDENTIFICATION BY MASS SPECTROMETRY [LARGE SCALE ANALYSIS]</scope>
</reference>
<reference key="8">
    <citation type="journal article" date="2013" name="J. Proteome Res.">
        <title>Toward a comprehensive characterization of a human cancer cell phosphoproteome.</title>
        <authorList>
            <person name="Zhou H."/>
            <person name="Di Palma S."/>
            <person name="Preisinger C."/>
            <person name="Peng M."/>
            <person name="Polat A.N."/>
            <person name="Heck A.J."/>
            <person name="Mohammed S."/>
        </authorList>
    </citation>
    <scope>PHOSPHORYLATION [LARGE SCALE ANALYSIS] AT SER-475; THR-481 AND SER-514</scope>
    <scope>IDENTIFICATION BY MASS SPECTROMETRY [LARGE SCALE ANALYSIS]</scope>
    <source>
        <tissue>Erythroleukemia</tissue>
    </source>
</reference>
<proteinExistence type="evidence at protein level"/>
<sequence length="688" mass="80302">MQVSSLNEVKIYSLSCGKSLPEWLSDRKKRALQKKDVDVRRRIELIQDFEMPTVCTTIKVSKDGQYILATGTYKPRVRCYDTYQLSLKFERCLDSEVVTFEILSDDYSKIVFLHNDRYIEFHSQSGFYYKTRIPKFGRDFSYHYPSCDLYFVGASSEVYRLNLEQGRYLNPLQTDAAENNVCDINSVHGLFATGTIEGRVECWDPRTRNRVGLLDCALNSVTADSEINSLPTISALKFNGALTMAVGTTTGQVLLYDLRSDKPLLVKDHQYGLPIKSVHFQDSLDLILSADSRIVKMWNKNSGKIFTSLEPEHDLNDVCLYPNSGMLLTANETPKMGIYYIPVLGPAPRWCSFLDNLTEELEENPESTVYDDYKFVTKKDLENLGLTHLIGSPFLRAYMHGFFMDIRLYHKVKLMVNPFAYEEYRKDKIRQKIEETRAQRVQLKKLPKVNKELALKLIEEEEEKQKSTWKKKVKSLPNILTDDRFKVMFENPDFQVDEESEEFRLLNPLVSKISEKRKKKLRLLEQQELREKEEEEEPEGKPSDAESSESSDDEKAWVEEVRKQRRLLQQEEKVKRQERLKEDQQTVLKPQFYEIKAGEEFRSFKDSATKQKLMNKTLEDRLKIEAKNGTLSVSDTTVGSKQLTFTLKRSEQQKKQQEAEKLHRQERKRLRRSAGHLKSRHKRGRSFH</sequence>
<name>NOL10_HUMAN</name>
<dbReference type="EMBL" id="AK024000">
    <property type="protein sequence ID" value="BAB14765.1"/>
    <property type="molecule type" value="mRNA"/>
</dbReference>
<dbReference type="EMBL" id="AK024137">
    <property type="protein sequence ID" value="BAB14836.1"/>
    <property type="molecule type" value="mRNA"/>
</dbReference>
<dbReference type="EMBL" id="AK290680">
    <property type="protein sequence ID" value="BAF83369.1"/>
    <property type="molecule type" value="mRNA"/>
</dbReference>
<dbReference type="EMBL" id="AK297169">
    <property type="protein sequence ID" value="BAG59662.1"/>
    <property type="molecule type" value="mRNA"/>
</dbReference>
<dbReference type="EMBL" id="AC007314">
    <property type="protein sequence ID" value="AAK52071.2"/>
    <property type="molecule type" value="Genomic_DNA"/>
</dbReference>
<dbReference type="EMBL" id="AC092687">
    <property type="protein sequence ID" value="AAY24068.1"/>
    <property type="molecule type" value="Genomic_DNA"/>
</dbReference>
<dbReference type="EMBL" id="CH471053">
    <property type="protein sequence ID" value="EAX00955.1"/>
    <property type="molecule type" value="Genomic_DNA"/>
</dbReference>
<dbReference type="EMBL" id="BC005125">
    <property type="protein sequence ID" value="AAH05125.1"/>
    <property type="molecule type" value="mRNA"/>
</dbReference>
<dbReference type="CCDS" id="CCDS1673.2">
    <molecule id="Q9BSC4-1"/>
</dbReference>
<dbReference type="CCDS" id="CCDS58697.1">
    <molecule id="Q9BSC4-4"/>
</dbReference>
<dbReference type="CCDS" id="CCDS58698.1">
    <molecule id="Q9BSC4-2"/>
</dbReference>
<dbReference type="RefSeq" id="NP_001248321.1">
    <molecule id="Q9BSC4-4"/>
    <property type="nucleotide sequence ID" value="NM_001261392.2"/>
</dbReference>
<dbReference type="RefSeq" id="NP_001248323.1">
    <molecule id="Q9BSC4-2"/>
    <property type="nucleotide sequence ID" value="NM_001261394.2"/>
</dbReference>
<dbReference type="RefSeq" id="NP_079170.2">
    <molecule id="Q9BSC4-1"/>
    <property type="nucleotide sequence ID" value="NM_024894.4"/>
</dbReference>
<dbReference type="PDB" id="7MQ8">
    <property type="method" value="EM"/>
    <property type="resolution" value="3.60 A"/>
    <property type="chains" value="NW=1-688"/>
</dbReference>
<dbReference type="PDB" id="7MQ9">
    <property type="method" value="EM"/>
    <property type="resolution" value="3.87 A"/>
    <property type="chains" value="NW=1-688"/>
</dbReference>
<dbReference type="PDBsum" id="7MQ8"/>
<dbReference type="PDBsum" id="7MQ9"/>
<dbReference type="EMDB" id="EMD-23936"/>
<dbReference type="EMDB" id="EMD-23937"/>
<dbReference type="SMR" id="Q9BSC4"/>
<dbReference type="BioGRID" id="123023">
    <property type="interactions" value="203"/>
</dbReference>
<dbReference type="CORUM" id="Q9BSC4"/>
<dbReference type="FunCoup" id="Q9BSC4">
    <property type="interactions" value="2935"/>
</dbReference>
<dbReference type="IntAct" id="Q9BSC4">
    <property type="interactions" value="93"/>
</dbReference>
<dbReference type="MINT" id="Q9BSC4"/>
<dbReference type="STRING" id="9606.ENSP00000371101"/>
<dbReference type="GlyGen" id="Q9BSC4">
    <property type="glycosylation" value="1 site, 1 N-linked glycan (1 site)"/>
</dbReference>
<dbReference type="iPTMnet" id="Q9BSC4"/>
<dbReference type="PhosphoSitePlus" id="Q9BSC4"/>
<dbReference type="SwissPalm" id="Q9BSC4"/>
<dbReference type="BioMuta" id="NOL10"/>
<dbReference type="jPOST" id="Q9BSC4"/>
<dbReference type="MassIVE" id="Q9BSC4"/>
<dbReference type="PaxDb" id="9606-ENSP00000371101"/>
<dbReference type="PeptideAtlas" id="Q9BSC4"/>
<dbReference type="ProteomicsDB" id="4565"/>
<dbReference type="ProteomicsDB" id="78875">
    <molecule id="Q9BSC4-1"/>
</dbReference>
<dbReference type="ProteomicsDB" id="78876">
    <molecule id="Q9BSC4-2"/>
</dbReference>
<dbReference type="ProteomicsDB" id="78877">
    <molecule id="Q9BSC4-3"/>
</dbReference>
<dbReference type="Pumba" id="Q9BSC4"/>
<dbReference type="Antibodypedia" id="26703">
    <property type="antibodies" value="96 antibodies from 20 providers"/>
</dbReference>
<dbReference type="DNASU" id="79954"/>
<dbReference type="Ensembl" id="ENST00000345985.7">
    <molecule id="Q9BSC4-2"/>
    <property type="protein sequence ID" value="ENSP00000263837.4"/>
    <property type="gene ID" value="ENSG00000115761.17"/>
</dbReference>
<dbReference type="Ensembl" id="ENST00000381685.10">
    <molecule id="Q9BSC4-1"/>
    <property type="protein sequence ID" value="ENSP00000371101.5"/>
    <property type="gene ID" value="ENSG00000115761.17"/>
</dbReference>
<dbReference type="Ensembl" id="ENST00000538384.5">
    <molecule id="Q9BSC4-4"/>
    <property type="protein sequence ID" value="ENSP00000439663.1"/>
    <property type="gene ID" value="ENSG00000115761.17"/>
</dbReference>
<dbReference type="GeneID" id="79954"/>
<dbReference type="KEGG" id="hsa:79954"/>
<dbReference type="MANE-Select" id="ENST00000381685.10">
    <property type="protein sequence ID" value="ENSP00000371101.5"/>
    <property type="RefSeq nucleotide sequence ID" value="NM_024894.4"/>
    <property type="RefSeq protein sequence ID" value="NP_079170.2"/>
</dbReference>
<dbReference type="UCSC" id="uc002rap.4">
    <molecule id="Q9BSC4-1"/>
    <property type="organism name" value="human"/>
</dbReference>
<dbReference type="AGR" id="HGNC:25862"/>
<dbReference type="CTD" id="79954"/>
<dbReference type="DisGeNET" id="79954"/>
<dbReference type="GeneCards" id="NOL10"/>
<dbReference type="HGNC" id="HGNC:25862">
    <property type="gene designation" value="NOL10"/>
</dbReference>
<dbReference type="HPA" id="ENSG00000115761">
    <property type="expression patterns" value="Low tissue specificity"/>
</dbReference>
<dbReference type="MIM" id="616197">
    <property type="type" value="gene"/>
</dbReference>
<dbReference type="neXtProt" id="NX_Q9BSC4"/>
<dbReference type="OpenTargets" id="ENSG00000115761"/>
<dbReference type="PharmGKB" id="PA142671257"/>
<dbReference type="VEuPathDB" id="HostDB:ENSG00000115761"/>
<dbReference type="eggNOG" id="KOG2321">
    <property type="taxonomic scope" value="Eukaryota"/>
</dbReference>
<dbReference type="GeneTree" id="ENSGT00390000007900"/>
<dbReference type="HOGENOM" id="CLU_009923_2_0_1"/>
<dbReference type="InParanoid" id="Q9BSC4"/>
<dbReference type="OMA" id="GYFMDVR"/>
<dbReference type="OrthoDB" id="273340at2759"/>
<dbReference type="PAN-GO" id="Q9BSC4">
    <property type="GO annotations" value="3 GO annotations based on evolutionary models"/>
</dbReference>
<dbReference type="PhylomeDB" id="Q9BSC4"/>
<dbReference type="TreeFam" id="TF105808"/>
<dbReference type="PathwayCommons" id="Q9BSC4"/>
<dbReference type="SignaLink" id="Q9BSC4"/>
<dbReference type="BioGRID-ORCS" id="79954">
    <property type="hits" value="800 hits in 1129 CRISPR screens"/>
</dbReference>
<dbReference type="CD-CODE" id="91857CE7">
    <property type="entry name" value="Nucleolus"/>
</dbReference>
<dbReference type="ChiTaRS" id="NOL10">
    <property type="organism name" value="human"/>
</dbReference>
<dbReference type="GenomeRNAi" id="79954"/>
<dbReference type="Pharos" id="Q9BSC4">
    <property type="development level" value="Tdark"/>
</dbReference>
<dbReference type="PRO" id="PR:Q9BSC4"/>
<dbReference type="Proteomes" id="UP000005640">
    <property type="component" value="Chromosome 2"/>
</dbReference>
<dbReference type="RNAct" id="Q9BSC4">
    <property type="molecule type" value="protein"/>
</dbReference>
<dbReference type="Bgee" id="ENSG00000115761">
    <property type="expression patterns" value="Expressed in sperm and 186 other cell types or tissues"/>
</dbReference>
<dbReference type="ExpressionAtlas" id="Q9BSC4">
    <property type="expression patterns" value="baseline and differential"/>
</dbReference>
<dbReference type="GO" id="GO:0005730">
    <property type="term" value="C:nucleolus"/>
    <property type="evidence" value="ECO:0000314"/>
    <property type="project" value="HPA"/>
</dbReference>
<dbReference type="GO" id="GO:0032040">
    <property type="term" value="C:small-subunit processome"/>
    <property type="evidence" value="ECO:0000318"/>
    <property type="project" value="GO_Central"/>
</dbReference>
<dbReference type="GO" id="GO:0003723">
    <property type="term" value="F:RNA binding"/>
    <property type="evidence" value="ECO:0007005"/>
    <property type="project" value="UniProtKB"/>
</dbReference>
<dbReference type="GO" id="GO:0000462">
    <property type="term" value="P:maturation of SSU-rRNA from tricistronic rRNA transcript (SSU-rRNA, 5.8S rRNA, LSU-rRNA)"/>
    <property type="evidence" value="ECO:0000318"/>
    <property type="project" value="GO_Central"/>
</dbReference>
<dbReference type="FunFam" id="2.130.10.10:FF:000601">
    <property type="entry name" value="Nucleolar protein 10"/>
    <property type="match status" value="1"/>
</dbReference>
<dbReference type="FunFam" id="2.130.10.10:FF:000980">
    <property type="entry name" value="Nucleolar protein 10"/>
    <property type="match status" value="1"/>
</dbReference>
<dbReference type="Gene3D" id="2.130.10.10">
    <property type="entry name" value="YVTN repeat-like/Quinoprotein amine dehydrogenase"/>
    <property type="match status" value="1"/>
</dbReference>
<dbReference type="InterPro" id="IPR056551">
    <property type="entry name" value="Beta-prop_NOL10_N"/>
</dbReference>
<dbReference type="InterPro" id="IPR040382">
    <property type="entry name" value="NOL10/Enp2"/>
</dbReference>
<dbReference type="InterPro" id="IPR056550">
    <property type="entry name" value="NOL10_2nd"/>
</dbReference>
<dbReference type="InterPro" id="IPR012580">
    <property type="entry name" value="NUC153"/>
</dbReference>
<dbReference type="InterPro" id="IPR015943">
    <property type="entry name" value="WD40/YVTN_repeat-like_dom_sf"/>
</dbReference>
<dbReference type="InterPro" id="IPR036322">
    <property type="entry name" value="WD40_repeat_dom_sf"/>
</dbReference>
<dbReference type="InterPro" id="IPR001680">
    <property type="entry name" value="WD40_rpt"/>
</dbReference>
<dbReference type="PANTHER" id="PTHR14927">
    <property type="entry name" value="NUCLEOLAR PROTEIN 10"/>
    <property type="match status" value="1"/>
</dbReference>
<dbReference type="PANTHER" id="PTHR14927:SF0">
    <property type="entry name" value="NUCLEOLAR PROTEIN 10"/>
    <property type="match status" value="1"/>
</dbReference>
<dbReference type="Pfam" id="PF23098">
    <property type="entry name" value="Beta-prop_NOL10_N"/>
    <property type="match status" value="1"/>
</dbReference>
<dbReference type="Pfam" id="PF23097">
    <property type="entry name" value="NOL10_2nd"/>
    <property type="match status" value="1"/>
</dbReference>
<dbReference type="Pfam" id="PF08159">
    <property type="entry name" value="NUC153"/>
    <property type="match status" value="1"/>
</dbReference>
<dbReference type="SMART" id="SM00320">
    <property type="entry name" value="WD40"/>
    <property type="match status" value="5"/>
</dbReference>
<dbReference type="SUPFAM" id="SSF50978">
    <property type="entry name" value="WD40 repeat-like"/>
    <property type="match status" value="1"/>
</dbReference>
<protein>
    <recommendedName>
        <fullName>Nucleolar protein 10</fullName>
    </recommendedName>
</protein>
<organism>
    <name type="scientific">Homo sapiens</name>
    <name type="common">Human</name>
    <dbReference type="NCBI Taxonomy" id="9606"/>
    <lineage>
        <taxon>Eukaryota</taxon>
        <taxon>Metazoa</taxon>
        <taxon>Chordata</taxon>
        <taxon>Craniata</taxon>
        <taxon>Vertebrata</taxon>
        <taxon>Euteleostomi</taxon>
        <taxon>Mammalia</taxon>
        <taxon>Eutheria</taxon>
        <taxon>Euarchontoglires</taxon>
        <taxon>Primates</taxon>
        <taxon>Haplorrhini</taxon>
        <taxon>Catarrhini</taxon>
        <taxon>Hominidae</taxon>
        <taxon>Homo</taxon>
    </lineage>
</organism>
<evidence type="ECO:0000255" key="1"/>
<evidence type="ECO:0000256" key="2">
    <source>
        <dbReference type="SAM" id="MobiDB-lite"/>
    </source>
</evidence>
<evidence type="ECO:0000269" key="3">
    <source>
    </source>
</evidence>
<evidence type="ECO:0000303" key="4">
    <source>
    </source>
</evidence>
<evidence type="ECO:0000305" key="5"/>
<evidence type="ECO:0007744" key="6">
    <source>
    </source>
</evidence>
<evidence type="ECO:0007744" key="7">
    <source>
    </source>
</evidence>
<evidence type="ECO:0007744" key="8">
    <source>
    </source>
</evidence>
<gene>
    <name type="primary">NOL10</name>
</gene>
<comment type="subcellular location">
    <subcellularLocation>
        <location evidence="3">Nucleus</location>
        <location evidence="3">Nucleolus</location>
    </subcellularLocation>
</comment>
<comment type="alternative products">
    <event type="alternative splicing"/>
    <isoform>
        <id>Q9BSC4-1</id>
        <name>1</name>
        <sequence type="displayed"/>
    </isoform>
    <isoform>
        <id>Q9BSC4-2</id>
        <name>2</name>
        <sequence type="described" ref="VSP_015456"/>
    </isoform>
    <isoform>
        <id>Q9BSC4-3</id>
        <name>3</name>
        <sequence type="described" ref="VSP_015454 VSP_015455 VSP_015457 VSP_015458"/>
    </isoform>
    <isoform>
        <id>Q9BSC4-4</id>
        <name>4</name>
        <sequence type="described" ref="VSP_045122"/>
    </isoform>
</comment>
<comment type="similarity">
    <text evidence="5">Belongs to the WD repeat NOL10/ENP2 family.</text>
</comment>
<feature type="chain" id="PRO_0000051101" description="Nucleolar protein 10">
    <location>
        <begin position="1"/>
        <end position="688"/>
    </location>
</feature>
<feature type="repeat" description="WD 1">
    <location>
        <begin position="44"/>
        <end position="82"/>
    </location>
</feature>
<feature type="repeat" description="WD 2">
    <location>
        <begin position="88"/>
        <end position="124"/>
    </location>
</feature>
<feature type="repeat" description="WD 3">
    <location>
        <begin position="127"/>
        <end position="163"/>
    </location>
</feature>
<feature type="repeat" description="WD 4">
    <location>
        <begin position="170"/>
        <end position="205"/>
    </location>
</feature>
<feature type="repeat" description="WD 5">
    <location>
        <begin position="219"/>
        <end position="258"/>
    </location>
</feature>
<feature type="repeat" description="WD 6">
    <location>
        <begin position="262"/>
        <end position="300"/>
    </location>
</feature>
<feature type="repeat" description="WD 7">
    <location>
        <begin position="304"/>
        <end position="341"/>
    </location>
</feature>
<feature type="region of interest" description="Disordered" evidence="2">
    <location>
        <begin position="529"/>
        <end position="557"/>
    </location>
</feature>
<feature type="region of interest" description="Disordered" evidence="2">
    <location>
        <begin position="645"/>
        <end position="688"/>
    </location>
</feature>
<feature type="coiled-coil region" evidence="1">
    <location>
        <begin position="423"/>
        <end position="446"/>
    </location>
</feature>
<feature type="coiled-coil region" evidence="1">
    <location>
        <begin position="514"/>
        <end position="589"/>
    </location>
</feature>
<feature type="coiled-coil region" evidence="1">
    <location>
        <begin position="640"/>
        <end position="673"/>
    </location>
</feature>
<feature type="compositionally biased region" description="Basic and acidic residues" evidence="2">
    <location>
        <begin position="648"/>
        <end position="663"/>
    </location>
</feature>
<feature type="compositionally biased region" description="Basic residues" evidence="2">
    <location>
        <begin position="664"/>
        <end position="688"/>
    </location>
</feature>
<feature type="modified residue" description="N-acetylmethionine" evidence="7">
    <location>
        <position position="1"/>
    </location>
</feature>
<feature type="modified residue" description="Phosphoserine" evidence="6">
    <location>
        <position position="25"/>
    </location>
</feature>
<feature type="modified residue" description="Phosphoserine" evidence="8">
    <location>
        <position position="475"/>
    </location>
</feature>
<feature type="modified residue" description="Phosphothreonine" evidence="8">
    <location>
        <position position="481"/>
    </location>
</feature>
<feature type="modified residue" description="Phosphoserine" evidence="8">
    <location>
        <position position="514"/>
    </location>
</feature>
<feature type="splice variant" id="VSP_015454" description="In isoform 3." evidence="4">
    <location>
        <begin position="1"/>
        <end position="150"/>
    </location>
</feature>
<feature type="splice variant" id="VSP_045122" description="In isoform 4." evidence="4">
    <location>
        <begin position="71"/>
        <end position="96"/>
    </location>
</feature>
<feature type="splice variant" id="VSP_015455" description="In isoform 3." evidence="4">
    <original>FVGA</original>
    <variation>MTTQ</variation>
    <location>
        <begin position="151"/>
        <end position="154"/>
    </location>
</feature>
<feature type="splice variant" id="VSP_015456" description="In isoform 2." evidence="4">
    <location>
        <begin position="253"/>
        <end position="302"/>
    </location>
</feature>
<feature type="splice variant" id="VSP_015457" description="In isoform 3." evidence="4">
    <original>VLG</original>
    <variation>PSL</variation>
    <location>
        <begin position="343"/>
        <end position="345"/>
    </location>
</feature>
<feature type="splice variant" id="VSP_015458" description="In isoform 3." evidence="4">
    <location>
        <begin position="346"/>
        <end position="688"/>
    </location>
</feature>
<feature type="sequence variant" id="VAR_060041" description="In dbSNP:rs2287059.">
    <original>D</original>
    <variation>N</variation>
    <location>
        <position position="635"/>
    </location>
</feature>
<feature type="sequence conflict" description="In Ref. 1; BAB14836." evidence="5" ref="1">
    <original>F</original>
    <variation>L</variation>
    <location>
        <position position="494"/>
    </location>
</feature>
<feature type="sequence conflict" description="In Ref. 1; BAB14836." evidence="5" ref="1">
    <original>Q</original>
    <variation>R</variation>
    <location>
        <position position="570"/>
    </location>
</feature>
<accession>Q9BSC4</accession>
<accession>A8K3R5</accession>
<accession>B4DLV0</accession>
<accession>Q53RC9</accession>
<accession>Q96TA5</accession>
<accession>Q9H7Y7</accession>
<accession>Q9H855</accession>
<keyword id="KW-0002">3D-structure</keyword>
<keyword id="KW-0007">Acetylation</keyword>
<keyword id="KW-0025">Alternative splicing</keyword>
<keyword id="KW-0175">Coiled coil</keyword>
<keyword id="KW-0539">Nucleus</keyword>
<keyword id="KW-0597">Phosphoprotein</keyword>
<keyword id="KW-1267">Proteomics identification</keyword>
<keyword id="KW-1185">Reference proteome</keyword>
<keyword id="KW-0677">Repeat</keyword>
<keyword id="KW-0853">WD repeat</keyword>